<dbReference type="EC" id="1.14.13.9" evidence="1"/>
<dbReference type="EMBL" id="AE008922">
    <property type="protein sequence ID" value="AAM40847.1"/>
    <property type="molecule type" value="Genomic_DNA"/>
</dbReference>
<dbReference type="RefSeq" id="NP_636923.1">
    <property type="nucleotide sequence ID" value="NC_003902.1"/>
</dbReference>
<dbReference type="RefSeq" id="WP_011036736.1">
    <property type="nucleotide sequence ID" value="NC_003902.1"/>
</dbReference>
<dbReference type="SMR" id="Q8PAD3"/>
<dbReference type="STRING" id="190485.XCC1552"/>
<dbReference type="EnsemblBacteria" id="AAM40847">
    <property type="protein sequence ID" value="AAM40847"/>
    <property type="gene ID" value="XCC1552"/>
</dbReference>
<dbReference type="KEGG" id="xcc:XCC1552"/>
<dbReference type="PATRIC" id="fig|190485.4.peg.1665"/>
<dbReference type="eggNOG" id="COG0654">
    <property type="taxonomic scope" value="Bacteria"/>
</dbReference>
<dbReference type="HOGENOM" id="CLU_023210_0_1_6"/>
<dbReference type="OrthoDB" id="9782160at2"/>
<dbReference type="UniPathway" id="UPA00253">
    <property type="reaction ID" value="UER00328"/>
</dbReference>
<dbReference type="Proteomes" id="UP000001010">
    <property type="component" value="Chromosome"/>
</dbReference>
<dbReference type="GO" id="GO:0071949">
    <property type="term" value="F:FAD binding"/>
    <property type="evidence" value="ECO:0007669"/>
    <property type="project" value="InterPro"/>
</dbReference>
<dbReference type="GO" id="GO:0004502">
    <property type="term" value="F:kynurenine 3-monooxygenase activity"/>
    <property type="evidence" value="ECO:0000318"/>
    <property type="project" value="GO_Central"/>
</dbReference>
<dbReference type="GO" id="GO:0043420">
    <property type="term" value="P:anthranilate metabolic process"/>
    <property type="evidence" value="ECO:0007669"/>
    <property type="project" value="UniProtKB-UniRule"/>
</dbReference>
<dbReference type="GO" id="GO:0070189">
    <property type="term" value="P:kynurenine metabolic process"/>
    <property type="evidence" value="ECO:0000318"/>
    <property type="project" value="GO_Central"/>
</dbReference>
<dbReference type="GO" id="GO:0006569">
    <property type="term" value="P:L-tryptophan catabolic process"/>
    <property type="evidence" value="ECO:0007669"/>
    <property type="project" value="UniProtKB-UniRule"/>
</dbReference>
<dbReference type="GO" id="GO:0009435">
    <property type="term" value="P:NAD biosynthetic process"/>
    <property type="evidence" value="ECO:0007669"/>
    <property type="project" value="UniProtKB-UniPathway"/>
</dbReference>
<dbReference type="GO" id="GO:0019805">
    <property type="term" value="P:quinolinate biosynthetic process"/>
    <property type="evidence" value="ECO:0007669"/>
    <property type="project" value="UniProtKB-UniRule"/>
</dbReference>
<dbReference type="FunFam" id="3.50.50.60:FF:000185">
    <property type="entry name" value="Kynurenine 3-monooxygenase"/>
    <property type="match status" value="1"/>
</dbReference>
<dbReference type="Gene3D" id="3.50.50.60">
    <property type="entry name" value="FAD/NAD(P)-binding domain"/>
    <property type="match status" value="1"/>
</dbReference>
<dbReference type="HAMAP" id="MF_01971">
    <property type="entry name" value="Kynurenine_monooxygenase"/>
    <property type="match status" value="1"/>
</dbReference>
<dbReference type="InterPro" id="IPR002938">
    <property type="entry name" value="FAD-bd"/>
</dbReference>
<dbReference type="InterPro" id="IPR036188">
    <property type="entry name" value="FAD/NAD-bd_sf"/>
</dbReference>
<dbReference type="InterPro" id="IPR027545">
    <property type="entry name" value="Kynurenine_monooxygenase"/>
</dbReference>
<dbReference type="PANTHER" id="PTHR46028">
    <property type="entry name" value="KYNURENINE 3-MONOOXYGENASE"/>
    <property type="match status" value="1"/>
</dbReference>
<dbReference type="PANTHER" id="PTHR46028:SF2">
    <property type="entry name" value="KYNURENINE 3-MONOOXYGENASE"/>
    <property type="match status" value="1"/>
</dbReference>
<dbReference type="Pfam" id="PF01494">
    <property type="entry name" value="FAD_binding_3"/>
    <property type="match status" value="2"/>
</dbReference>
<dbReference type="PRINTS" id="PR00420">
    <property type="entry name" value="RNGMNOXGNASE"/>
</dbReference>
<dbReference type="SUPFAM" id="SSF51905">
    <property type="entry name" value="FAD/NAD(P)-binding domain"/>
    <property type="match status" value="1"/>
</dbReference>
<evidence type="ECO:0000255" key="1">
    <source>
        <dbReference type="HAMAP-Rule" id="MF_01971"/>
    </source>
</evidence>
<feature type="chain" id="PRO_0000361950" description="Kynurenine 3-monooxygenase">
    <location>
        <begin position="1"/>
        <end position="456"/>
    </location>
</feature>
<organism>
    <name type="scientific">Xanthomonas campestris pv. campestris (strain ATCC 33913 / DSM 3586 / NCPPB 528 / LMG 568 / P 25)</name>
    <dbReference type="NCBI Taxonomy" id="190485"/>
    <lineage>
        <taxon>Bacteria</taxon>
        <taxon>Pseudomonadati</taxon>
        <taxon>Pseudomonadota</taxon>
        <taxon>Gammaproteobacteria</taxon>
        <taxon>Lysobacterales</taxon>
        <taxon>Lysobacteraceae</taxon>
        <taxon>Xanthomonas</taxon>
    </lineage>
</organism>
<protein>
    <recommendedName>
        <fullName evidence="1">Kynurenine 3-monooxygenase</fullName>
        <ecNumber evidence="1">1.14.13.9</ecNumber>
    </recommendedName>
    <alternativeName>
        <fullName evidence="1">Kynurenine 3-hydroxylase</fullName>
    </alternativeName>
</protein>
<sequence>MSAAASPRSLTLIGAGLAGCLLAILLSRRGWQITLYERRGDPRIKGYESGRSINLALAERGRHALRQAGAEDAVMAKAVMMRGRMIHPVSGEPQLQRYGRDDSEVIWSIHRAALNVTLLDLAEQAGARVHFYRRLHTVDFDAGYARFIDDRDDQPHEIHFQALVGSDGAGSALRAAMQRKAPVGEHIAFLDHSYKELEIPPRADGGFRIERNALHIWPRGRYMCIALPNDGGTFTVTLFLPNEGMPSFATTRSGDEALALFARDFPDALPLIPQLKEHWEEHPPGLLGTLTRERWHLDGRAVLLGDAAHAMVPFHGQGMNCAFEDCVALAEQLDAHSDLSEAFAAFEAARRDDAAAIQQMALENYLEMRDRVGDAQFLLQRALEQQLQARWPTRFVPHYTMVTFLRTRYAIALARSEIQREILLEATHGHTDLSRIDWVALETVVHARLEPLEGAH</sequence>
<name>KMO_XANCP</name>
<reference key="1">
    <citation type="journal article" date="2002" name="Nature">
        <title>Comparison of the genomes of two Xanthomonas pathogens with differing host specificities.</title>
        <authorList>
            <person name="da Silva A.C.R."/>
            <person name="Ferro J.A."/>
            <person name="Reinach F.C."/>
            <person name="Farah C.S."/>
            <person name="Furlan L.R."/>
            <person name="Quaggio R.B."/>
            <person name="Monteiro-Vitorello C.B."/>
            <person name="Van Sluys M.A."/>
            <person name="Almeida N.F. Jr."/>
            <person name="Alves L.M.C."/>
            <person name="do Amaral A.M."/>
            <person name="Bertolini M.C."/>
            <person name="Camargo L.E.A."/>
            <person name="Camarotte G."/>
            <person name="Cannavan F."/>
            <person name="Cardozo J."/>
            <person name="Chambergo F."/>
            <person name="Ciapina L.P."/>
            <person name="Cicarelli R.M.B."/>
            <person name="Coutinho L.L."/>
            <person name="Cursino-Santos J.R."/>
            <person name="El-Dorry H."/>
            <person name="Faria J.B."/>
            <person name="Ferreira A.J.S."/>
            <person name="Ferreira R.C.C."/>
            <person name="Ferro M.I.T."/>
            <person name="Formighieri E.F."/>
            <person name="Franco M.C."/>
            <person name="Greggio C.C."/>
            <person name="Gruber A."/>
            <person name="Katsuyama A.M."/>
            <person name="Kishi L.T."/>
            <person name="Leite R.P."/>
            <person name="Lemos E.G.M."/>
            <person name="Lemos M.V.F."/>
            <person name="Locali E.C."/>
            <person name="Machado M.A."/>
            <person name="Madeira A.M.B.N."/>
            <person name="Martinez-Rossi N.M."/>
            <person name="Martins E.C."/>
            <person name="Meidanis J."/>
            <person name="Menck C.F.M."/>
            <person name="Miyaki C.Y."/>
            <person name="Moon D.H."/>
            <person name="Moreira L.M."/>
            <person name="Novo M.T.M."/>
            <person name="Okura V.K."/>
            <person name="Oliveira M.C."/>
            <person name="Oliveira V.R."/>
            <person name="Pereira H.A."/>
            <person name="Rossi A."/>
            <person name="Sena J.A.D."/>
            <person name="Silva C."/>
            <person name="de Souza R.F."/>
            <person name="Spinola L.A.F."/>
            <person name="Takita M.A."/>
            <person name="Tamura R.E."/>
            <person name="Teixeira E.C."/>
            <person name="Tezza R.I.D."/>
            <person name="Trindade dos Santos M."/>
            <person name="Truffi D."/>
            <person name="Tsai S.M."/>
            <person name="White F.F."/>
            <person name="Setubal J.C."/>
            <person name="Kitajima J.P."/>
        </authorList>
    </citation>
    <scope>NUCLEOTIDE SEQUENCE [LARGE SCALE GENOMIC DNA]</scope>
    <source>
        <strain>ATCC 33913 / DSM 3586 / NCPPB 528 / LMG 568 / P 25</strain>
    </source>
</reference>
<keyword id="KW-0274">FAD</keyword>
<keyword id="KW-0285">Flavoprotein</keyword>
<keyword id="KW-0503">Monooxygenase</keyword>
<keyword id="KW-0521">NADP</keyword>
<keyword id="KW-0560">Oxidoreductase</keyword>
<keyword id="KW-0662">Pyridine nucleotide biosynthesis</keyword>
<keyword id="KW-1185">Reference proteome</keyword>
<proteinExistence type="inferred from homology"/>
<comment type="function">
    <text evidence="1">Catalyzes the hydroxylation of L-kynurenine (L-Kyn) to form 3-hydroxy-L-kynurenine (L-3OHKyn). Required for synthesis of quinolinic acid.</text>
</comment>
<comment type="catalytic activity">
    <reaction evidence="1">
        <text>L-kynurenine + NADPH + O2 + H(+) = 3-hydroxy-L-kynurenine + NADP(+) + H2O</text>
        <dbReference type="Rhea" id="RHEA:20545"/>
        <dbReference type="ChEBI" id="CHEBI:15377"/>
        <dbReference type="ChEBI" id="CHEBI:15378"/>
        <dbReference type="ChEBI" id="CHEBI:15379"/>
        <dbReference type="ChEBI" id="CHEBI:57783"/>
        <dbReference type="ChEBI" id="CHEBI:57959"/>
        <dbReference type="ChEBI" id="CHEBI:58125"/>
        <dbReference type="ChEBI" id="CHEBI:58349"/>
        <dbReference type="EC" id="1.14.13.9"/>
    </reaction>
</comment>
<comment type="cofactor">
    <cofactor evidence="1">
        <name>FAD</name>
        <dbReference type="ChEBI" id="CHEBI:57692"/>
    </cofactor>
</comment>
<comment type="pathway">
    <text evidence="1">Cofactor biosynthesis; NAD(+) biosynthesis; quinolinate from L-kynurenine: step 1/3.</text>
</comment>
<comment type="similarity">
    <text evidence="1">Belongs to the aromatic-ring hydroxylase family. KMO subfamily.</text>
</comment>
<gene>
    <name evidence="1" type="primary">kmo</name>
    <name type="ordered locus">XCC1552</name>
</gene>
<accession>Q8PAD3</accession>